<feature type="signal peptide" evidence="1">
    <location>
        <begin position="1"/>
        <end position="21"/>
    </location>
</feature>
<feature type="chain" id="PRO_1000145640" description="Multidrug resistance protein MdtA">
    <location>
        <begin position="22"/>
        <end position="415"/>
    </location>
</feature>
<feature type="region of interest" description="Disordered" evidence="2">
    <location>
        <begin position="32"/>
        <end position="59"/>
    </location>
</feature>
<feature type="region of interest" description="Disordered" evidence="2">
    <location>
        <begin position="392"/>
        <end position="415"/>
    </location>
</feature>
<feature type="compositionally biased region" description="Basic and acidic residues" evidence="2">
    <location>
        <begin position="399"/>
        <end position="415"/>
    </location>
</feature>
<accession>B1LNW7</accession>
<organism>
    <name type="scientific">Escherichia coli (strain SMS-3-5 / SECEC)</name>
    <dbReference type="NCBI Taxonomy" id="439855"/>
    <lineage>
        <taxon>Bacteria</taxon>
        <taxon>Pseudomonadati</taxon>
        <taxon>Pseudomonadota</taxon>
        <taxon>Gammaproteobacteria</taxon>
        <taxon>Enterobacterales</taxon>
        <taxon>Enterobacteriaceae</taxon>
        <taxon>Escherichia</taxon>
    </lineage>
</organism>
<protein>
    <recommendedName>
        <fullName evidence="1">Multidrug resistance protein MdtA</fullName>
    </recommendedName>
    <alternativeName>
        <fullName evidence="1">Multidrug transporter MdtA</fullName>
    </alternativeName>
</protein>
<keyword id="KW-0997">Cell inner membrane</keyword>
<keyword id="KW-1003">Cell membrane</keyword>
<keyword id="KW-0472">Membrane</keyword>
<keyword id="KW-0732">Signal</keyword>
<keyword id="KW-0813">Transport</keyword>
<sequence>MKGSYKSRWVIVIVVVIAAIAAFWFWQGRNDSRSAAPGATKQAQQSPAGGRRGMRSGPLAPVQAATAVEQAVPRYLTGLGTITAANTVTVRSRVDGQLMALHFQEGQQVKAGDLLAEIDPSQFKVALAQALGQLAKDKATLANARRDLARYQQLVKTNLVSRQELDAQQALVSETEGTIKADEASVASAQLQLDWSRITAPVDGRVGLKQVDVGNQISSGDTTGIVVITQTHPIDLVFTLPESDIATVVQAQKAGKPLVVEAWDRTNSKKLSEGTLLSLDNQIDATTGTIKVKARFNNQDDALFPNQFVNARMLVDTEQNAVVIPTAALQMGNEGHFVWVLNSENKVSKHLVTPGIQDSQRVVIRAGISAGDRVVTDGIDRLTEGAKVEVVEAQSATTSEEKATSREYAKKGARS</sequence>
<comment type="function">
    <text evidence="1">The MdtABC tripartite complex confers resistance against novobiocin and deoxycholate.</text>
</comment>
<comment type="subunit">
    <text evidence="1">Part of a tripartite efflux system composed of MdtA, MdtB and MdtC.</text>
</comment>
<comment type="subcellular location">
    <subcellularLocation>
        <location evidence="1">Cell inner membrane</location>
        <topology evidence="1">Peripheral membrane protein</topology>
    </subcellularLocation>
</comment>
<comment type="induction">
    <text evidence="1">The mdtABC operon is transcriptionally activated by BaeR.</text>
</comment>
<comment type="similarity">
    <text evidence="1">Belongs to the membrane fusion protein (MFP) (TC 8.A.1) family.</text>
</comment>
<reference key="1">
    <citation type="journal article" date="2008" name="J. Bacteriol.">
        <title>Insights into the environmental resistance gene pool from the genome sequence of the multidrug-resistant environmental isolate Escherichia coli SMS-3-5.</title>
        <authorList>
            <person name="Fricke W.F."/>
            <person name="Wright M.S."/>
            <person name="Lindell A.H."/>
            <person name="Harkins D.M."/>
            <person name="Baker-Austin C."/>
            <person name="Ravel J."/>
            <person name="Stepanauskas R."/>
        </authorList>
    </citation>
    <scope>NUCLEOTIDE SEQUENCE [LARGE SCALE GENOMIC DNA]</scope>
    <source>
        <strain>SMS-3-5 / SECEC</strain>
    </source>
</reference>
<name>MDTA_ECOSM</name>
<proteinExistence type="inferred from homology"/>
<evidence type="ECO:0000255" key="1">
    <source>
        <dbReference type="HAMAP-Rule" id="MF_01422"/>
    </source>
</evidence>
<evidence type="ECO:0000256" key="2">
    <source>
        <dbReference type="SAM" id="MobiDB-lite"/>
    </source>
</evidence>
<gene>
    <name evidence="1" type="primary">mdtA</name>
    <name type="ordered locus">EcSMS35_0986</name>
</gene>
<dbReference type="EMBL" id="CP000970">
    <property type="protein sequence ID" value="ACB19855.1"/>
    <property type="molecule type" value="Genomic_DNA"/>
</dbReference>
<dbReference type="RefSeq" id="WP_000678998.1">
    <property type="nucleotide sequence ID" value="NC_010498.1"/>
</dbReference>
<dbReference type="SMR" id="B1LNW7"/>
<dbReference type="KEGG" id="ecm:EcSMS35_0986"/>
<dbReference type="HOGENOM" id="CLU_018816_2_0_6"/>
<dbReference type="Proteomes" id="UP000007011">
    <property type="component" value="Chromosome"/>
</dbReference>
<dbReference type="GO" id="GO:1990281">
    <property type="term" value="C:efflux pump complex"/>
    <property type="evidence" value="ECO:0007669"/>
    <property type="project" value="TreeGrafter"/>
</dbReference>
<dbReference type="GO" id="GO:0005886">
    <property type="term" value="C:plasma membrane"/>
    <property type="evidence" value="ECO:0007669"/>
    <property type="project" value="UniProtKB-SubCell"/>
</dbReference>
<dbReference type="GO" id="GO:0015562">
    <property type="term" value="F:efflux transmembrane transporter activity"/>
    <property type="evidence" value="ECO:0007669"/>
    <property type="project" value="TreeGrafter"/>
</dbReference>
<dbReference type="FunFam" id="2.40.420.20:FF:000001">
    <property type="entry name" value="Efflux RND transporter periplasmic adaptor subunit"/>
    <property type="match status" value="1"/>
</dbReference>
<dbReference type="FunFam" id="1.10.287.470:FF:000005">
    <property type="entry name" value="Multidrug resistance protein MdtA"/>
    <property type="match status" value="1"/>
</dbReference>
<dbReference type="FunFam" id="2.40.30.170:FF:000006">
    <property type="entry name" value="Multidrug resistance protein MdtA"/>
    <property type="match status" value="1"/>
</dbReference>
<dbReference type="Gene3D" id="2.40.30.170">
    <property type="match status" value="1"/>
</dbReference>
<dbReference type="Gene3D" id="2.40.420.20">
    <property type="match status" value="1"/>
</dbReference>
<dbReference type="Gene3D" id="2.40.50.100">
    <property type="match status" value="1"/>
</dbReference>
<dbReference type="Gene3D" id="1.10.287.470">
    <property type="entry name" value="Helix hairpin bin"/>
    <property type="match status" value="1"/>
</dbReference>
<dbReference type="HAMAP" id="MF_01422">
    <property type="entry name" value="MdtA"/>
    <property type="match status" value="1"/>
</dbReference>
<dbReference type="InterPro" id="IPR032317">
    <property type="entry name" value="CusB_D23"/>
</dbReference>
<dbReference type="InterPro" id="IPR022824">
    <property type="entry name" value="Multidrug-R_MdtA"/>
</dbReference>
<dbReference type="InterPro" id="IPR006143">
    <property type="entry name" value="RND_pump_MFP"/>
</dbReference>
<dbReference type="NCBIfam" id="NF008589">
    <property type="entry name" value="PRK11556.1"/>
    <property type="match status" value="1"/>
</dbReference>
<dbReference type="NCBIfam" id="TIGR01730">
    <property type="entry name" value="RND_mfp"/>
    <property type="match status" value="1"/>
</dbReference>
<dbReference type="PANTHER" id="PTHR30469">
    <property type="entry name" value="MULTIDRUG RESISTANCE PROTEIN MDTA"/>
    <property type="match status" value="1"/>
</dbReference>
<dbReference type="PANTHER" id="PTHR30469:SF12">
    <property type="entry name" value="MULTIDRUG RESISTANCE PROTEIN MDTA"/>
    <property type="match status" value="1"/>
</dbReference>
<dbReference type="Pfam" id="PF16576">
    <property type="entry name" value="HlyD_D23"/>
    <property type="match status" value="1"/>
</dbReference>
<dbReference type="SUPFAM" id="SSF111369">
    <property type="entry name" value="HlyD-like secretion proteins"/>
    <property type="match status" value="1"/>
</dbReference>